<evidence type="ECO:0000250" key="1"/>
<evidence type="ECO:0000255" key="2"/>
<evidence type="ECO:0000303" key="3">
    <source>
    </source>
</evidence>
<evidence type="ECO:0000305" key="4"/>
<evidence type="ECO:0000305" key="5">
    <source>
    </source>
</evidence>
<feature type="signal peptide" evidence="2">
    <location>
        <begin position="1"/>
        <end position="23"/>
    </location>
</feature>
<feature type="propeptide" id="PRO_0000346151" evidence="1">
    <location>
        <begin position="24"/>
        <end position="46"/>
    </location>
</feature>
<feature type="peptide" id="PRO_0000346152" description="Turripeptide Gsp9.2">
    <location>
        <begin position="47"/>
        <end position="82"/>
    </location>
</feature>
<feature type="modified residue" description="4-hydroxyproline" evidence="1">
    <location>
        <position position="49"/>
    </location>
</feature>
<feature type="modified residue" description="4-hydroxyproline" evidence="1">
    <location>
        <position position="50"/>
    </location>
</feature>
<feature type="modified residue" description="4-carboxyglutamate" evidence="1">
    <location>
        <position position="56"/>
    </location>
</feature>
<feature type="disulfide bond" evidence="1">
    <location>
        <begin position="53"/>
        <end position="68"/>
    </location>
</feature>
<feature type="disulfide bond" evidence="1">
    <location>
        <begin position="58"/>
        <end position="72"/>
    </location>
</feature>
<feature type="disulfide bond" evidence="1">
    <location>
        <begin position="64"/>
        <end position="79"/>
    </location>
</feature>
<protein>
    <recommendedName>
        <fullName evidence="3">Turripeptide Gsp9.2</fullName>
    </recommendedName>
</protein>
<accession>P0C850</accession>
<dbReference type="GO" id="GO:0005576">
    <property type="term" value="C:extracellular region"/>
    <property type="evidence" value="ECO:0007669"/>
    <property type="project" value="UniProtKB-SubCell"/>
</dbReference>
<dbReference type="GO" id="GO:0090729">
    <property type="term" value="F:toxin activity"/>
    <property type="evidence" value="ECO:0007669"/>
    <property type="project" value="UniProtKB-KW"/>
</dbReference>
<dbReference type="InterPro" id="IPR026210">
    <property type="entry name" value="Toxin_Pg"/>
</dbReference>
<dbReference type="PRINTS" id="PR02080">
    <property type="entry name" value="TOXINPGFAMLY"/>
</dbReference>
<name>C92_GEMSP</name>
<keyword id="KW-1015">Disulfide bond</keyword>
<keyword id="KW-0301">Gamma-carboxyglutamic acid</keyword>
<keyword id="KW-0379">Hydroxylation</keyword>
<keyword id="KW-0964">Secreted</keyword>
<keyword id="KW-0732">Signal</keyword>
<keyword id="KW-0800">Toxin</keyword>
<proteinExistence type="inferred from homology"/>
<reference key="1">
    <citation type="journal article" date="2008" name="Toxicon">
        <title>A rapidly diverging superfamily of peptide toxins in venomous Gemmula species.</title>
        <authorList>
            <person name="Heralde F.M. III"/>
            <person name="Imperial J."/>
            <person name="Bandyopadhyay P.K."/>
            <person name="Olivera B.M."/>
            <person name="Concepcion G.P."/>
            <person name="Santos A.D."/>
        </authorList>
    </citation>
    <scope>NUCLEOTIDE SEQUENCE [MRNA]</scope>
    <source>
        <tissue>Venom duct</tissue>
    </source>
</reference>
<organism>
    <name type="scientific">Gemmula speciosa</name>
    <name type="common">Splendid gem-turris</name>
    <name type="synonym">Pleurotoma speciosa</name>
    <dbReference type="NCBI Taxonomy" id="439592"/>
    <lineage>
        <taxon>Eukaryota</taxon>
        <taxon>Metazoa</taxon>
        <taxon>Spiralia</taxon>
        <taxon>Lophotrochozoa</taxon>
        <taxon>Mollusca</taxon>
        <taxon>Gastropoda</taxon>
        <taxon>Caenogastropoda</taxon>
        <taxon>Neogastropoda</taxon>
        <taxon>Conoidea</taxon>
        <taxon>Turridae</taxon>
        <taxon>Gemmula</taxon>
    </lineage>
</organism>
<comment type="subcellular location">
    <subcellularLocation>
        <location evidence="5">Secreted</location>
    </subcellularLocation>
</comment>
<comment type="tissue specificity">
    <text evidence="5">Expressed by the venom duct.</text>
</comment>
<comment type="domain">
    <text evidence="4">The cysteine framework is IX (C-C-C-C-C-C).</text>
</comment>
<comment type="similarity">
    <text evidence="4">Belongs to the Pg turripeptide superfamily.</text>
</comment>
<sequence length="82" mass="9101">MMAKLMITVMMVLLLSLQQGADGRSERWRKNQMAASSIMRNLITARGDPPRFCRDELCSGDGDCSVWCTAGCNHDMGKCDTL</sequence>